<name>KV3AD_MOUSE</name>
<proteinExistence type="evidence at protein level"/>
<organism>
    <name type="scientific">Mus musculus</name>
    <name type="common">Mouse</name>
    <dbReference type="NCBI Taxonomy" id="10090"/>
    <lineage>
        <taxon>Eukaryota</taxon>
        <taxon>Metazoa</taxon>
        <taxon>Chordata</taxon>
        <taxon>Craniata</taxon>
        <taxon>Vertebrata</taxon>
        <taxon>Euteleostomi</taxon>
        <taxon>Mammalia</taxon>
        <taxon>Eutheria</taxon>
        <taxon>Euarchontoglires</taxon>
        <taxon>Glires</taxon>
        <taxon>Rodentia</taxon>
        <taxon>Myomorpha</taxon>
        <taxon>Muroidea</taxon>
        <taxon>Muridae</taxon>
        <taxon>Murinae</taxon>
        <taxon>Mus</taxon>
        <taxon>Mus</taxon>
    </lineage>
</organism>
<accession>P01665</accession>
<keyword id="KW-0002">3D-structure</keyword>
<keyword id="KW-1064">Adaptive immunity</keyword>
<keyword id="KW-0903">Direct protein sequencing</keyword>
<keyword id="KW-1015">Disulfide bond</keyword>
<keyword id="KW-0391">Immunity</keyword>
<keyword id="KW-1280">Immunoglobulin</keyword>
<keyword id="KW-1185">Reference proteome</keyword>
<reference key="1">
    <citation type="journal article" date="1978" name="Nature">
        <title>Rearrangement of genetic information may produce immunoglobulin diversity.</title>
        <authorList>
            <person name="Weigert M."/>
            <person name="Gatmaitan L."/>
            <person name="Loh E."/>
            <person name="Schilling J."/>
            <person name="Hood L.E."/>
        </authorList>
    </citation>
    <scope>PROTEIN SEQUENCE</scope>
</reference>
<reference key="2">
    <citation type="journal article" date="1993" name="Eur. J. Immunol.">
        <title>Variable region gene selection of immunoglobulin G-expressing B cells with specificity for a defined epitope on type II collagen.</title>
        <authorList>
            <person name="Mo J.A."/>
            <person name="Bona C.A."/>
            <person name="Holmdahl R."/>
        </authorList>
    </citation>
    <scope>NUCLEOTIDE SEQUENCE [MRNA] OF 10-99</scope>
</reference>
<reference key="3">
    <citation type="journal article" date="2000" name="Structure">
        <title>NMR structure of an anti-gp120 antibody complex with a V3 peptide reveals a surface important for co-receptor binding.</title>
        <authorList>
            <person name="Tugarinov V."/>
            <person name="Zvi A."/>
            <person name="Levy R."/>
            <person name="Hayek Y."/>
            <person name="Matsushita S."/>
            <person name="Anglister J."/>
        </authorList>
    </citation>
    <scope>STRUCTURE BY NMR OF 1-111</scope>
</reference>
<feature type="chain" id="PRO_0000059787" description="Ig kappa chain V-III region PC 7043">
    <location>
        <begin position="1"/>
        <end position="111" status="greater than"/>
    </location>
</feature>
<feature type="region of interest" description="Framework-1">
    <location>
        <begin position="1"/>
        <end position="23"/>
    </location>
</feature>
<feature type="region of interest" description="Complementarity-determining-1">
    <location>
        <begin position="24"/>
        <end position="38"/>
    </location>
</feature>
<feature type="region of interest" description="Framework-2">
    <location>
        <begin position="39"/>
        <end position="53"/>
    </location>
</feature>
<feature type="region of interest" description="Complementarity-determining-2">
    <location>
        <begin position="54"/>
        <end position="60"/>
    </location>
</feature>
<feature type="region of interest" description="Framework-3">
    <location>
        <begin position="61"/>
        <end position="92"/>
    </location>
</feature>
<feature type="region of interest" description="Complementarity-determining-3">
    <location>
        <begin position="93"/>
        <end position="101"/>
    </location>
</feature>
<feature type="region of interest" description="Framework-4">
    <location>
        <begin position="102"/>
        <end position="111"/>
    </location>
</feature>
<feature type="disulfide bond" evidence="1">
    <location>
        <begin position="23"/>
        <end position="92"/>
    </location>
</feature>
<feature type="non-terminal residue">
    <location>
        <position position="111"/>
    </location>
</feature>
<feature type="strand" evidence="2">
    <location>
        <begin position="4"/>
        <end position="7"/>
    </location>
</feature>
<feature type="strand" evidence="2">
    <location>
        <begin position="9"/>
        <end position="14"/>
    </location>
</feature>
<feature type="strand" evidence="2">
    <location>
        <begin position="19"/>
        <end position="27"/>
    </location>
</feature>
<feature type="strand" evidence="2">
    <location>
        <begin position="37"/>
        <end position="42"/>
    </location>
</feature>
<feature type="strand" evidence="2">
    <location>
        <begin position="49"/>
        <end position="53"/>
    </location>
</feature>
<feature type="turn" evidence="2">
    <location>
        <begin position="54"/>
        <end position="56"/>
    </location>
</feature>
<feature type="strand" evidence="2">
    <location>
        <begin position="66"/>
        <end position="71"/>
    </location>
</feature>
<feature type="strand" evidence="2">
    <location>
        <begin position="74"/>
        <end position="81"/>
    </location>
</feature>
<feature type="helix" evidence="2">
    <location>
        <begin position="84"/>
        <end position="86"/>
    </location>
</feature>
<feature type="strand" evidence="2">
    <location>
        <begin position="88"/>
        <end position="94"/>
    </location>
</feature>
<feature type="strand" evidence="2">
    <location>
        <begin position="96"/>
        <end position="99"/>
    </location>
</feature>
<feature type="strand" evidence="2">
    <location>
        <begin position="106"/>
        <end position="111"/>
    </location>
</feature>
<sequence>DIVLTQSPASLAVSLGQRATISCKASQSVDYDGDSYMNWYQQKPGQPPKLLIYAASNLESGIPARFSGSGSGTDFTLNIHPVEEEDAATYYCQQSNEDPFTFGSGTKLEIK</sequence>
<evidence type="ECO:0000255" key="1">
    <source>
        <dbReference type="PROSITE-ProRule" id="PRU00114"/>
    </source>
</evidence>
<evidence type="ECO:0007829" key="2">
    <source>
        <dbReference type="PDB" id="1F11"/>
    </source>
</evidence>
<protein>
    <recommendedName>
        <fullName>Ig kappa chain V-III region PC 7043</fullName>
    </recommendedName>
</protein>
<dbReference type="EMBL" id="Z25444">
    <property type="protein sequence ID" value="CAA80931.1"/>
    <property type="molecule type" value="mRNA"/>
</dbReference>
<dbReference type="EMBL" id="Z25446">
    <property type="protein sequence ID" value="CAA80933.1"/>
    <property type="molecule type" value="mRNA"/>
</dbReference>
<dbReference type="EMBL" id="Z25448">
    <property type="protein sequence ID" value="CAA80935.1"/>
    <property type="molecule type" value="mRNA"/>
</dbReference>
<dbReference type="EMBL" id="Z25450">
    <property type="protein sequence ID" value="CAA80937.1"/>
    <property type="molecule type" value="mRNA"/>
</dbReference>
<dbReference type="EMBL" id="Z25452">
    <property type="protein sequence ID" value="CAA80939.1"/>
    <property type="molecule type" value="mRNA"/>
</dbReference>
<dbReference type="EMBL" id="Z25454">
    <property type="protein sequence ID" value="CAA80941.1"/>
    <property type="molecule type" value="mRNA"/>
</dbReference>
<dbReference type="EMBL" id="Z25458">
    <property type="protein sequence ID" value="CAA80945.1"/>
    <property type="molecule type" value="mRNA"/>
</dbReference>
<dbReference type="PIR" id="A01937">
    <property type="entry name" value="KVMS43"/>
</dbReference>
<dbReference type="PDB" id="1F11">
    <property type="method" value="X-ray"/>
    <property type="resolution" value="3.00 A"/>
    <property type="chains" value="A/C=1-111"/>
</dbReference>
<dbReference type="PDB" id="1QNZ">
    <property type="method" value="NMR"/>
    <property type="chains" value="L=1-111"/>
</dbReference>
<dbReference type="PDB" id="2ZCH">
    <property type="method" value="X-ray"/>
    <property type="resolution" value="2.83 A"/>
    <property type="chains" value="L=1-111"/>
</dbReference>
<dbReference type="PDB" id="2ZCK">
    <property type="method" value="X-ray"/>
    <property type="resolution" value="3.10 A"/>
    <property type="chains" value="L=1-111"/>
</dbReference>
<dbReference type="PDB" id="2ZCL">
    <property type="method" value="X-ray"/>
    <property type="resolution" value="3.25 A"/>
    <property type="chains" value="L=1-111"/>
</dbReference>
<dbReference type="PDBsum" id="1F11"/>
<dbReference type="PDBsum" id="1QNZ"/>
<dbReference type="PDBsum" id="2ZCH"/>
<dbReference type="PDBsum" id="2ZCK"/>
<dbReference type="PDBsum" id="2ZCL"/>
<dbReference type="BMRB" id="P01665"/>
<dbReference type="SMR" id="P01665"/>
<dbReference type="FunCoup" id="P01665">
    <property type="interactions" value="777"/>
</dbReference>
<dbReference type="MINT" id="P01665"/>
<dbReference type="jPOST" id="P01665"/>
<dbReference type="InParanoid" id="P01665"/>
<dbReference type="EvolutionaryTrace" id="P01665"/>
<dbReference type="Proteomes" id="UP000000589">
    <property type="component" value="Unplaced"/>
</dbReference>
<dbReference type="RNAct" id="P01665">
    <property type="molecule type" value="protein"/>
</dbReference>
<dbReference type="GO" id="GO:0019814">
    <property type="term" value="C:immunoglobulin complex"/>
    <property type="evidence" value="ECO:0000318"/>
    <property type="project" value="GO_Central"/>
</dbReference>
<dbReference type="GO" id="GO:0002250">
    <property type="term" value="P:adaptive immune response"/>
    <property type="evidence" value="ECO:0007669"/>
    <property type="project" value="UniProtKB-KW"/>
</dbReference>
<dbReference type="GO" id="GO:0006955">
    <property type="term" value="P:immune response"/>
    <property type="evidence" value="ECO:0000318"/>
    <property type="project" value="GO_Central"/>
</dbReference>
<dbReference type="CDD" id="cd04980">
    <property type="entry name" value="IgV_L_kappa"/>
    <property type="match status" value="1"/>
</dbReference>
<dbReference type="FunFam" id="2.60.40.10:FF:000350">
    <property type="entry name" value="Immunoglobulin kappa chain variable 18-36"/>
    <property type="match status" value="1"/>
</dbReference>
<dbReference type="Gene3D" id="2.60.40.10">
    <property type="entry name" value="Immunoglobulins"/>
    <property type="match status" value="1"/>
</dbReference>
<dbReference type="InterPro" id="IPR007110">
    <property type="entry name" value="Ig-like_dom"/>
</dbReference>
<dbReference type="InterPro" id="IPR036179">
    <property type="entry name" value="Ig-like_dom_sf"/>
</dbReference>
<dbReference type="InterPro" id="IPR013783">
    <property type="entry name" value="Ig-like_fold"/>
</dbReference>
<dbReference type="InterPro" id="IPR003599">
    <property type="entry name" value="Ig_sub"/>
</dbReference>
<dbReference type="InterPro" id="IPR013106">
    <property type="entry name" value="Ig_V-set"/>
</dbReference>
<dbReference type="InterPro" id="IPR050150">
    <property type="entry name" value="IgV_Light_Chain"/>
</dbReference>
<dbReference type="PANTHER" id="PTHR23267">
    <property type="entry name" value="IMMUNOGLOBULIN LIGHT CHAIN"/>
    <property type="match status" value="1"/>
</dbReference>
<dbReference type="Pfam" id="PF07686">
    <property type="entry name" value="V-set"/>
    <property type="match status" value="1"/>
</dbReference>
<dbReference type="SMART" id="SM00409">
    <property type="entry name" value="IG"/>
    <property type="match status" value="1"/>
</dbReference>
<dbReference type="SMART" id="SM00406">
    <property type="entry name" value="IGv"/>
    <property type="match status" value="1"/>
</dbReference>
<dbReference type="SUPFAM" id="SSF48726">
    <property type="entry name" value="Immunoglobulin"/>
    <property type="match status" value="1"/>
</dbReference>
<dbReference type="PROSITE" id="PS50835">
    <property type="entry name" value="IG_LIKE"/>
    <property type="match status" value="1"/>
</dbReference>